<reference key="1">
    <citation type="journal article" date="2000" name="Nature">
        <title>Complete genome sequence of Pseudomonas aeruginosa PAO1, an opportunistic pathogen.</title>
        <authorList>
            <person name="Stover C.K."/>
            <person name="Pham X.-Q.T."/>
            <person name="Erwin A.L."/>
            <person name="Mizoguchi S.D."/>
            <person name="Warrener P."/>
            <person name="Hickey M.J."/>
            <person name="Brinkman F.S.L."/>
            <person name="Hufnagle W.O."/>
            <person name="Kowalik D.J."/>
            <person name="Lagrou M."/>
            <person name="Garber R.L."/>
            <person name="Goltry L."/>
            <person name="Tolentino E."/>
            <person name="Westbrock-Wadman S."/>
            <person name="Yuan Y."/>
            <person name="Brody L.L."/>
            <person name="Coulter S.N."/>
            <person name="Folger K.R."/>
            <person name="Kas A."/>
            <person name="Larbig K."/>
            <person name="Lim R.M."/>
            <person name="Smith K.A."/>
            <person name="Spencer D.H."/>
            <person name="Wong G.K.-S."/>
            <person name="Wu Z."/>
            <person name="Paulsen I.T."/>
            <person name="Reizer J."/>
            <person name="Saier M.H. Jr."/>
            <person name="Hancock R.E.W."/>
            <person name="Lory S."/>
            <person name="Olson M.V."/>
        </authorList>
    </citation>
    <scope>NUCLEOTIDE SEQUENCE [LARGE SCALE GENOMIC DNA]</scope>
    <source>
        <strain>ATCC 15692 / DSM 22644 / CIP 104116 / JCM 14847 / LMG 12228 / 1C / PRS 101 / PAO1</strain>
    </source>
</reference>
<dbReference type="EC" id="2.1.1.133"/>
<dbReference type="EMBL" id="AE004091">
    <property type="protein sequence ID" value="AAG06336.1"/>
    <property type="molecule type" value="Genomic_DNA"/>
</dbReference>
<dbReference type="PIR" id="G83276">
    <property type="entry name" value="G83276"/>
</dbReference>
<dbReference type="RefSeq" id="NP_251638.1">
    <property type="nucleotide sequence ID" value="NC_002516.2"/>
</dbReference>
<dbReference type="RefSeq" id="WP_003102926.1">
    <property type="nucleotide sequence ID" value="NZ_QZGE01000009.1"/>
</dbReference>
<dbReference type="SMR" id="Q9HZP9"/>
<dbReference type="STRING" id="208964.PA2948"/>
<dbReference type="PaxDb" id="208964-PA2948"/>
<dbReference type="GeneID" id="882854"/>
<dbReference type="KEGG" id="pae:PA2948"/>
<dbReference type="PATRIC" id="fig|208964.12.peg.3094"/>
<dbReference type="PseudoCAP" id="PA2948"/>
<dbReference type="HOGENOM" id="CLU_011276_7_1_6"/>
<dbReference type="InParanoid" id="Q9HZP9"/>
<dbReference type="OrthoDB" id="9815856at2"/>
<dbReference type="PhylomeDB" id="Q9HZP9"/>
<dbReference type="BioCyc" id="PAER208964:G1FZ6-2999-MONOMER"/>
<dbReference type="UniPathway" id="UPA00148">
    <property type="reaction ID" value="UER00215"/>
</dbReference>
<dbReference type="Proteomes" id="UP000002438">
    <property type="component" value="Chromosome"/>
</dbReference>
<dbReference type="GO" id="GO:0046026">
    <property type="term" value="F:precorrin-4 C11-methyltransferase activity"/>
    <property type="evidence" value="ECO:0007669"/>
    <property type="project" value="UniProtKB-EC"/>
</dbReference>
<dbReference type="GO" id="GO:0009236">
    <property type="term" value="P:cobalamin biosynthetic process"/>
    <property type="evidence" value="ECO:0007669"/>
    <property type="project" value="UniProtKB-UniPathway"/>
</dbReference>
<dbReference type="GO" id="GO:0032259">
    <property type="term" value="P:methylation"/>
    <property type="evidence" value="ECO:0007669"/>
    <property type="project" value="UniProtKB-KW"/>
</dbReference>
<dbReference type="CDD" id="cd11641">
    <property type="entry name" value="Precorrin-4_C11-MT"/>
    <property type="match status" value="1"/>
</dbReference>
<dbReference type="Gene3D" id="3.40.1010.10">
    <property type="entry name" value="Cobalt-precorrin-4 Transmethylase, Domain 1"/>
    <property type="match status" value="1"/>
</dbReference>
<dbReference type="Gene3D" id="3.30.950.10">
    <property type="entry name" value="Methyltransferase, Cobalt-precorrin-4 Transmethylase, Domain 2"/>
    <property type="match status" value="1"/>
</dbReference>
<dbReference type="InterPro" id="IPR000878">
    <property type="entry name" value="4pyrrol_Mease"/>
</dbReference>
<dbReference type="InterPro" id="IPR035996">
    <property type="entry name" value="4pyrrol_Methylase_sf"/>
</dbReference>
<dbReference type="InterPro" id="IPR014777">
    <property type="entry name" value="4pyrrole_Mease_sub1"/>
</dbReference>
<dbReference type="InterPro" id="IPR014776">
    <property type="entry name" value="4pyrrole_Mease_sub2"/>
</dbReference>
<dbReference type="InterPro" id="IPR006362">
    <property type="entry name" value="Cbl_synth_CobM/CibF"/>
</dbReference>
<dbReference type="InterPro" id="IPR050161">
    <property type="entry name" value="Siro_Cobalamin_biosynth"/>
</dbReference>
<dbReference type="InterPro" id="IPR003043">
    <property type="entry name" value="Uropor_MeTrfase_CS"/>
</dbReference>
<dbReference type="NCBIfam" id="TIGR01465">
    <property type="entry name" value="cobM_cbiF"/>
    <property type="match status" value="1"/>
</dbReference>
<dbReference type="PANTHER" id="PTHR45790:SF4">
    <property type="entry name" value="COBALT-PRECORRIN-4 C(11)-METHYLTRANSFERASE"/>
    <property type="match status" value="1"/>
</dbReference>
<dbReference type="PANTHER" id="PTHR45790">
    <property type="entry name" value="SIROHEME SYNTHASE-RELATED"/>
    <property type="match status" value="1"/>
</dbReference>
<dbReference type="Pfam" id="PF00590">
    <property type="entry name" value="TP_methylase"/>
    <property type="match status" value="1"/>
</dbReference>
<dbReference type="SUPFAM" id="SSF53790">
    <property type="entry name" value="Tetrapyrrole methylase"/>
    <property type="match status" value="1"/>
</dbReference>
<dbReference type="PROSITE" id="PS00839">
    <property type="entry name" value="SUMT_1"/>
    <property type="match status" value="1"/>
</dbReference>
<protein>
    <recommendedName>
        <fullName>Precorrin-4 C(11)-methyltransferase</fullName>
        <ecNumber>2.1.1.133</ecNumber>
    </recommendedName>
    <alternativeName>
        <fullName>Precorrin-3 methylase</fullName>
    </alternativeName>
</protein>
<sequence length="250" mass="27040">MTVYFIGAGPGDPDLITVKGQRLIRQCPVILYAGSLVPQALLEGHQAGQVVNTAELDLEQIVELLAQAHRRGLDVARVHSGDPSLYGAIGEQIRHLRELGIPYEIVPGVTATAACAALLGCELTLPEVSQTLILTRYAARTKMPEGESLGDLARHRATLAIHLGVAHLAKIVEELLPHYGADCPVAVIHRASWPDQEQVRGTLGDILPKVAARNFRRTALILVGEVLAAEGFADSSLYRAEHRHLYRPGE</sequence>
<gene>
    <name type="primary">cobM</name>
    <name type="ordered locus">PA2948</name>
</gene>
<proteinExistence type="inferred from homology"/>
<accession>Q9HZP9</accession>
<evidence type="ECO:0000250" key="1"/>
<evidence type="ECO:0000305" key="2"/>
<organism>
    <name type="scientific">Pseudomonas aeruginosa (strain ATCC 15692 / DSM 22644 / CIP 104116 / JCM 14847 / LMG 12228 / 1C / PRS 101 / PAO1)</name>
    <dbReference type="NCBI Taxonomy" id="208964"/>
    <lineage>
        <taxon>Bacteria</taxon>
        <taxon>Pseudomonadati</taxon>
        <taxon>Pseudomonadota</taxon>
        <taxon>Gammaproteobacteria</taxon>
        <taxon>Pseudomonadales</taxon>
        <taxon>Pseudomonadaceae</taxon>
        <taxon>Pseudomonas</taxon>
    </lineage>
</organism>
<name>COBM_PSEAE</name>
<comment type="function">
    <text evidence="1">Catalyzes the methylation of C-11 in precorrin-4 to form precorrin-5.</text>
</comment>
<comment type="catalytic activity">
    <reaction>
        <text>precorrin-4 + S-adenosyl-L-methionine = precorrin-5 + S-adenosyl-L-homocysteine</text>
        <dbReference type="Rhea" id="RHEA:22012"/>
        <dbReference type="ChEBI" id="CHEBI:57769"/>
        <dbReference type="ChEBI" id="CHEBI:57856"/>
        <dbReference type="ChEBI" id="CHEBI:59789"/>
        <dbReference type="ChEBI" id="CHEBI:77871"/>
        <dbReference type="EC" id="2.1.1.133"/>
    </reaction>
</comment>
<comment type="pathway">
    <text>Cofactor biosynthesis; adenosylcobalamin biosynthesis; cob(II)yrinate a,c-diamide from precorrin-2 (aerobic route): step 4/10.</text>
</comment>
<comment type="similarity">
    <text evidence="2">Belongs to the precorrin methyltransferase family.</text>
</comment>
<feature type="chain" id="PRO_0000287735" description="Precorrin-4 C(11)-methyltransferase">
    <location>
        <begin position="1"/>
        <end position="250"/>
    </location>
</feature>
<keyword id="KW-0169">Cobalamin biosynthesis</keyword>
<keyword id="KW-0489">Methyltransferase</keyword>
<keyword id="KW-1185">Reference proteome</keyword>
<keyword id="KW-0949">S-adenosyl-L-methionine</keyword>
<keyword id="KW-0808">Transferase</keyword>